<protein>
    <recommendedName>
        <fullName evidence="1">Bifunctional protein FolD</fullName>
    </recommendedName>
    <domain>
        <recommendedName>
            <fullName evidence="1">Methylenetetrahydrofolate dehydrogenase</fullName>
            <ecNumber evidence="1">1.5.1.5</ecNumber>
        </recommendedName>
    </domain>
    <domain>
        <recommendedName>
            <fullName evidence="1">Methenyltetrahydrofolate cyclohydrolase</fullName>
            <ecNumber evidence="1">3.5.4.9</ecNumber>
        </recommendedName>
    </domain>
</protein>
<sequence length="282" mass="30589">MAMIIDGKRISGEIKDELKAEVSELKSQGKEVTLAVIQVGTDPASTVYVGNKKKACEYCGIRSLAYELPLETTEEELLNLINELNDRDDVTGILVQLPLPDHIEENKVIKTIDPKKDVDGFHPESVGALSIGQAGYLSCTPAGIVQLLKRSGIEIEGKECVVLGRSNIVGKPMALLLLRENGTVTICHSKTKNLSEITKRADILVVAIGKPRFLTKEYVKDGAVVIDVGMHRDENNKLCGDVDYDDVVDKVSAITPVPGGVGPMTIAMLMNNCVYGAKKFQI</sequence>
<proteinExistence type="inferred from homology"/>
<name>FOLD_LACP7</name>
<organism>
    <name type="scientific">Lachnoclostridium phytofermentans (strain ATCC 700394 / DSM 18823 / ISDg)</name>
    <name type="common">Clostridium phytofermentans</name>
    <dbReference type="NCBI Taxonomy" id="357809"/>
    <lineage>
        <taxon>Bacteria</taxon>
        <taxon>Bacillati</taxon>
        <taxon>Bacillota</taxon>
        <taxon>Clostridia</taxon>
        <taxon>Lachnospirales</taxon>
        <taxon>Lachnospiraceae</taxon>
    </lineage>
</organism>
<evidence type="ECO:0000255" key="1">
    <source>
        <dbReference type="HAMAP-Rule" id="MF_01576"/>
    </source>
</evidence>
<keyword id="KW-0028">Amino-acid biosynthesis</keyword>
<keyword id="KW-0368">Histidine biosynthesis</keyword>
<keyword id="KW-0378">Hydrolase</keyword>
<keyword id="KW-0486">Methionine biosynthesis</keyword>
<keyword id="KW-0511">Multifunctional enzyme</keyword>
<keyword id="KW-0521">NADP</keyword>
<keyword id="KW-0554">One-carbon metabolism</keyword>
<keyword id="KW-0560">Oxidoreductase</keyword>
<keyword id="KW-0658">Purine biosynthesis</keyword>
<keyword id="KW-1185">Reference proteome</keyword>
<accession>A9KLS3</accession>
<dbReference type="EC" id="1.5.1.5" evidence="1"/>
<dbReference type="EC" id="3.5.4.9" evidence="1"/>
<dbReference type="EMBL" id="CP000885">
    <property type="protein sequence ID" value="ABX42817.1"/>
    <property type="molecule type" value="Genomic_DNA"/>
</dbReference>
<dbReference type="RefSeq" id="WP_012200470.1">
    <property type="nucleotide sequence ID" value="NC_010001.1"/>
</dbReference>
<dbReference type="SMR" id="A9KLS3"/>
<dbReference type="STRING" id="357809.Cphy_2456"/>
<dbReference type="KEGG" id="cpy:Cphy_2456"/>
<dbReference type="eggNOG" id="COG0190">
    <property type="taxonomic scope" value="Bacteria"/>
</dbReference>
<dbReference type="HOGENOM" id="CLU_034045_2_1_9"/>
<dbReference type="OrthoDB" id="9803580at2"/>
<dbReference type="UniPathway" id="UPA00193"/>
<dbReference type="Proteomes" id="UP000000370">
    <property type="component" value="Chromosome"/>
</dbReference>
<dbReference type="GO" id="GO:0005829">
    <property type="term" value="C:cytosol"/>
    <property type="evidence" value="ECO:0007669"/>
    <property type="project" value="TreeGrafter"/>
</dbReference>
<dbReference type="GO" id="GO:0004477">
    <property type="term" value="F:methenyltetrahydrofolate cyclohydrolase activity"/>
    <property type="evidence" value="ECO:0007669"/>
    <property type="project" value="UniProtKB-UniRule"/>
</dbReference>
<dbReference type="GO" id="GO:0004488">
    <property type="term" value="F:methylenetetrahydrofolate dehydrogenase (NADP+) activity"/>
    <property type="evidence" value="ECO:0007669"/>
    <property type="project" value="UniProtKB-UniRule"/>
</dbReference>
<dbReference type="GO" id="GO:0000105">
    <property type="term" value="P:L-histidine biosynthetic process"/>
    <property type="evidence" value="ECO:0007669"/>
    <property type="project" value="UniProtKB-KW"/>
</dbReference>
<dbReference type="GO" id="GO:0009086">
    <property type="term" value="P:methionine biosynthetic process"/>
    <property type="evidence" value="ECO:0007669"/>
    <property type="project" value="UniProtKB-KW"/>
</dbReference>
<dbReference type="GO" id="GO:0006164">
    <property type="term" value="P:purine nucleotide biosynthetic process"/>
    <property type="evidence" value="ECO:0007669"/>
    <property type="project" value="UniProtKB-KW"/>
</dbReference>
<dbReference type="GO" id="GO:0035999">
    <property type="term" value="P:tetrahydrofolate interconversion"/>
    <property type="evidence" value="ECO:0007669"/>
    <property type="project" value="UniProtKB-UniRule"/>
</dbReference>
<dbReference type="CDD" id="cd01080">
    <property type="entry name" value="NAD_bind_m-THF_DH_Cyclohyd"/>
    <property type="match status" value="1"/>
</dbReference>
<dbReference type="FunFam" id="3.40.50.720:FF:000094">
    <property type="entry name" value="Bifunctional protein FolD"/>
    <property type="match status" value="1"/>
</dbReference>
<dbReference type="FunFam" id="3.40.50.10860:FF:000005">
    <property type="entry name" value="C-1-tetrahydrofolate synthase, cytoplasmic, putative"/>
    <property type="match status" value="1"/>
</dbReference>
<dbReference type="Gene3D" id="3.40.50.10860">
    <property type="entry name" value="Leucine Dehydrogenase, chain A, domain 1"/>
    <property type="match status" value="1"/>
</dbReference>
<dbReference type="Gene3D" id="3.40.50.720">
    <property type="entry name" value="NAD(P)-binding Rossmann-like Domain"/>
    <property type="match status" value="1"/>
</dbReference>
<dbReference type="HAMAP" id="MF_01576">
    <property type="entry name" value="THF_DHG_CYH"/>
    <property type="match status" value="1"/>
</dbReference>
<dbReference type="InterPro" id="IPR046346">
    <property type="entry name" value="Aminoacid_DH-like_N_sf"/>
</dbReference>
<dbReference type="InterPro" id="IPR036291">
    <property type="entry name" value="NAD(P)-bd_dom_sf"/>
</dbReference>
<dbReference type="InterPro" id="IPR000672">
    <property type="entry name" value="THF_DH/CycHdrlase"/>
</dbReference>
<dbReference type="InterPro" id="IPR020630">
    <property type="entry name" value="THF_DH/CycHdrlase_cat_dom"/>
</dbReference>
<dbReference type="InterPro" id="IPR020867">
    <property type="entry name" value="THF_DH/CycHdrlase_CS"/>
</dbReference>
<dbReference type="InterPro" id="IPR020631">
    <property type="entry name" value="THF_DH/CycHdrlase_NAD-bd_dom"/>
</dbReference>
<dbReference type="NCBIfam" id="NF008058">
    <property type="entry name" value="PRK10792.1"/>
    <property type="match status" value="1"/>
</dbReference>
<dbReference type="NCBIfam" id="NF010783">
    <property type="entry name" value="PRK14186.1"/>
    <property type="match status" value="1"/>
</dbReference>
<dbReference type="PANTHER" id="PTHR48099:SF5">
    <property type="entry name" value="C-1-TETRAHYDROFOLATE SYNTHASE, CYTOPLASMIC"/>
    <property type="match status" value="1"/>
</dbReference>
<dbReference type="PANTHER" id="PTHR48099">
    <property type="entry name" value="C-1-TETRAHYDROFOLATE SYNTHASE, CYTOPLASMIC-RELATED"/>
    <property type="match status" value="1"/>
</dbReference>
<dbReference type="Pfam" id="PF00763">
    <property type="entry name" value="THF_DHG_CYH"/>
    <property type="match status" value="1"/>
</dbReference>
<dbReference type="Pfam" id="PF02882">
    <property type="entry name" value="THF_DHG_CYH_C"/>
    <property type="match status" value="1"/>
</dbReference>
<dbReference type="PRINTS" id="PR00085">
    <property type="entry name" value="THFDHDRGNASE"/>
</dbReference>
<dbReference type="SUPFAM" id="SSF53223">
    <property type="entry name" value="Aminoacid dehydrogenase-like, N-terminal domain"/>
    <property type="match status" value="1"/>
</dbReference>
<dbReference type="SUPFAM" id="SSF51735">
    <property type="entry name" value="NAD(P)-binding Rossmann-fold domains"/>
    <property type="match status" value="1"/>
</dbReference>
<dbReference type="PROSITE" id="PS00767">
    <property type="entry name" value="THF_DHG_CYH_2"/>
    <property type="match status" value="1"/>
</dbReference>
<comment type="function">
    <text evidence="1">Catalyzes the oxidation of 5,10-methylenetetrahydrofolate to 5,10-methenyltetrahydrofolate and then the hydrolysis of 5,10-methenyltetrahydrofolate to 10-formyltetrahydrofolate.</text>
</comment>
<comment type="catalytic activity">
    <reaction evidence="1">
        <text>(6R)-5,10-methylene-5,6,7,8-tetrahydrofolate + NADP(+) = (6R)-5,10-methenyltetrahydrofolate + NADPH</text>
        <dbReference type="Rhea" id="RHEA:22812"/>
        <dbReference type="ChEBI" id="CHEBI:15636"/>
        <dbReference type="ChEBI" id="CHEBI:57455"/>
        <dbReference type="ChEBI" id="CHEBI:57783"/>
        <dbReference type="ChEBI" id="CHEBI:58349"/>
        <dbReference type="EC" id="1.5.1.5"/>
    </reaction>
</comment>
<comment type="catalytic activity">
    <reaction evidence="1">
        <text>(6R)-5,10-methenyltetrahydrofolate + H2O = (6R)-10-formyltetrahydrofolate + H(+)</text>
        <dbReference type="Rhea" id="RHEA:23700"/>
        <dbReference type="ChEBI" id="CHEBI:15377"/>
        <dbReference type="ChEBI" id="CHEBI:15378"/>
        <dbReference type="ChEBI" id="CHEBI:57455"/>
        <dbReference type="ChEBI" id="CHEBI:195366"/>
        <dbReference type="EC" id="3.5.4.9"/>
    </reaction>
</comment>
<comment type="pathway">
    <text evidence="1">One-carbon metabolism; tetrahydrofolate interconversion.</text>
</comment>
<comment type="subunit">
    <text evidence="1">Homodimer.</text>
</comment>
<comment type="similarity">
    <text evidence="1">Belongs to the tetrahydrofolate dehydrogenase/cyclohydrolase family.</text>
</comment>
<feature type="chain" id="PRO_1000087896" description="Bifunctional protein FolD">
    <location>
        <begin position="1"/>
        <end position="282"/>
    </location>
</feature>
<feature type="binding site" evidence="1">
    <location>
        <begin position="164"/>
        <end position="166"/>
    </location>
    <ligand>
        <name>NADP(+)</name>
        <dbReference type="ChEBI" id="CHEBI:58349"/>
    </ligand>
</feature>
<feature type="binding site" evidence="1">
    <location>
        <position position="189"/>
    </location>
    <ligand>
        <name>NADP(+)</name>
        <dbReference type="ChEBI" id="CHEBI:58349"/>
    </ligand>
</feature>
<reference key="1">
    <citation type="submission" date="2007-11" db="EMBL/GenBank/DDBJ databases">
        <title>Complete genome sequence of Clostridium phytofermentans ISDg.</title>
        <authorList>
            <person name="Leschine S.B."/>
            <person name="Warnick T.A."/>
            <person name="Blanchard J.L."/>
            <person name="Schnell D.J."/>
            <person name="Petit E.L."/>
            <person name="LaTouf W.G."/>
            <person name="Copeland A."/>
            <person name="Lucas S."/>
            <person name="Lapidus A."/>
            <person name="Barry K."/>
            <person name="Glavina del Rio T."/>
            <person name="Dalin E."/>
            <person name="Tice H."/>
            <person name="Pitluck S."/>
            <person name="Kiss H."/>
            <person name="Brettin T."/>
            <person name="Bruce D."/>
            <person name="Detter J.C."/>
            <person name="Han C."/>
            <person name="Kuske C."/>
            <person name="Schmutz J."/>
            <person name="Larimer F."/>
            <person name="Land M."/>
            <person name="Hauser L."/>
            <person name="Kyrpides N."/>
            <person name="Kim E.A."/>
            <person name="Richardson P."/>
        </authorList>
    </citation>
    <scope>NUCLEOTIDE SEQUENCE [LARGE SCALE GENOMIC DNA]</scope>
    <source>
        <strain>ATCC 700394 / DSM 18823 / ISDg</strain>
    </source>
</reference>
<gene>
    <name evidence="1" type="primary">folD</name>
    <name type="ordered locus">Cphy_2456</name>
</gene>